<organism>
    <name type="scientific">Rickettsia bellii (strain OSU 85-389)</name>
    <dbReference type="NCBI Taxonomy" id="391896"/>
    <lineage>
        <taxon>Bacteria</taxon>
        <taxon>Pseudomonadati</taxon>
        <taxon>Pseudomonadota</taxon>
        <taxon>Alphaproteobacteria</taxon>
        <taxon>Rickettsiales</taxon>
        <taxon>Rickettsiaceae</taxon>
        <taxon>Rickettsieae</taxon>
        <taxon>Rickettsia</taxon>
        <taxon>belli group</taxon>
    </lineage>
</organism>
<dbReference type="EMBL" id="CP000849">
    <property type="protein sequence ID" value="ABV78529.1"/>
    <property type="molecule type" value="Genomic_DNA"/>
</dbReference>
<dbReference type="SMR" id="A8GUN3"/>
<dbReference type="KEGG" id="rbo:A1I_00635"/>
<dbReference type="HOGENOM" id="CLU_101379_2_0_5"/>
<dbReference type="GO" id="GO:0003677">
    <property type="term" value="F:DNA binding"/>
    <property type="evidence" value="ECO:0007669"/>
    <property type="project" value="UniProtKB-UniRule"/>
</dbReference>
<dbReference type="GO" id="GO:0070063">
    <property type="term" value="F:RNA polymerase binding"/>
    <property type="evidence" value="ECO:0007669"/>
    <property type="project" value="InterPro"/>
</dbReference>
<dbReference type="GO" id="GO:0006354">
    <property type="term" value="P:DNA-templated transcription elongation"/>
    <property type="evidence" value="ECO:0007669"/>
    <property type="project" value="TreeGrafter"/>
</dbReference>
<dbReference type="GO" id="GO:0032784">
    <property type="term" value="P:regulation of DNA-templated transcription elongation"/>
    <property type="evidence" value="ECO:0007669"/>
    <property type="project" value="UniProtKB-UniRule"/>
</dbReference>
<dbReference type="FunFam" id="1.10.287.180:FF:000001">
    <property type="entry name" value="Transcription elongation factor GreA"/>
    <property type="match status" value="1"/>
</dbReference>
<dbReference type="FunFam" id="3.10.50.30:FF:000001">
    <property type="entry name" value="Transcription elongation factor GreA"/>
    <property type="match status" value="1"/>
</dbReference>
<dbReference type="Gene3D" id="3.10.50.30">
    <property type="entry name" value="Transcription elongation factor, GreA/GreB, C-terminal domain"/>
    <property type="match status" value="1"/>
</dbReference>
<dbReference type="Gene3D" id="1.10.287.180">
    <property type="entry name" value="Transcription elongation factor, GreA/GreB, N-terminal domain"/>
    <property type="match status" value="1"/>
</dbReference>
<dbReference type="HAMAP" id="MF_00105">
    <property type="entry name" value="GreA_GreB"/>
    <property type="match status" value="1"/>
</dbReference>
<dbReference type="InterPro" id="IPR036953">
    <property type="entry name" value="GreA/GreB_C_sf"/>
</dbReference>
<dbReference type="InterPro" id="IPR018151">
    <property type="entry name" value="TF_GreA/GreB_CS"/>
</dbReference>
<dbReference type="InterPro" id="IPR006359">
    <property type="entry name" value="Tscrpt_elong_fac_GreA"/>
</dbReference>
<dbReference type="InterPro" id="IPR028624">
    <property type="entry name" value="Tscrpt_elong_fac_GreA/B"/>
</dbReference>
<dbReference type="InterPro" id="IPR001437">
    <property type="entry name" value="Tscrpt_elong_fac_GreA/B_C"/>
</dbReference>
<dbReference type="InterPro" id="IPR023459">
    <property type="entry name" value="Tscrpt_elong_fac_GreA/B_fam"/>
</dbReference>
<dbReference type="InterPro" id="IPR022691">
    <property type="entry name" value="Tscrpt_elong_fac_GreA/B_N"/>
</dbReference>
<dbReference type="InterPro" id="IPR036805">
    <property type="entry name" value="Tscrpt_elong_fac_GreA/B_N_sf"/>
</dbReference>
<dbReference type="NCBIfam" id="TIGR01462">
    <property type="entry name" value="greA"/>
    <property type="match status" value="1"/>
</dbReference>
<dbReference type="NCBIfam" id="NF001261">
    <property type="entry name" value="PRK00226.1-2"/>
    <property type="match status" value="1"/>
</dbReference>
<dbReference type="NCBIfam" id="NF001263">
    <property type="entry name" value="PRK00226.1-4"/>
    <property type="match status" value="1"/>
</dbReference>
<dbReference type="NCBIfam" id="NF001264">
    <property type="entry name" value="PRK00226.1-5"/>
    <property type="match status" value="1"/>
</dbReference>
<dbReference type="PANTHER" id="PTHR30437">
    <property type="entry name" value="TRANSCRIPTION ELONGATION FACTOR GREA"/>
    <property type="match status" value="1"/>
</dbReference>
<dbReference type="PANTHER" id="PTHR30437:SF4">
    <property type="entry name" value="TRANSCRIPTION ELONGATION FACTOR GREA"/>
    <property type="match status" value="1"/>
</dbReference>
<dbReference type="Pfam" id="PF01272">
    <property type="entry name" value="GreA_GreB"/>
    <property type="match status" value="1"/>
</dbReference>
<dbReference type="Pfam" id="PF03449">
    <property type="entry name" value="GreA_GreB_N"/>
    <property type="match status" value="1"/>
</dbReference>
<dbReference type="PIRSF" id="PIRSF006092">
    <property type="entry name" value="GreA_GreB"/>
    <property type="match status" value="1"/>
</dbReference>
<dbReference type="SUPFAM" id="SSF54534">
    <property type="entry name" value="FKBP-like"/>
    <property type="match status" value="1"/>
</dbReference>
<dbReference type="SUPFAM" id="SSF46557">
    <property type="entry name" value="GreA transcript cleavage protein, N-terminal domain"/>
    <property type="match status" value="1"/>
</dbReference>
<dbReference type="PROSITE" id="PS00829">
    <property type="entry name" value="GREAB_1"/>
    <property type="match status" value="1"/>
</dbReference>
<dbReference type="PROSITE" id="PS00830">
    <property type="entry name" value="GREAB_2"/>
    <property type="match status" value="1"/>
</dbReference>
<evidence type="ECO:0000255" key="1">
    <source>
        <dbReference type="HAMAP-Rule" id="MF_00105"/>
    </source>
</evidence>
<protein>
    <recommendedName>
        <fullName evidence="1">Transcription elongation factor GreA</fullName>
    </recommendedName>
    <alternativeName>
        <fullName evidence="1">Transcript cleavage factor GreA</fullName>
    </alternativeName>
</protein>
<comment type="function">
    <text evidence="1">Necessary for efficient RNA polymerase transcription elongation past template-encoded arresting sites. The arresting sites in DNA have the property of trapping a certain fraction of elongating RNA polymerases that pass through, resulting in locked ternary complexes. Cleavage of the nascent transcript by cleavage factors such as GreA or GreB allows the resumption of elongation from the new 3'terminus. GreA releases sequences of 2 to 3 nucleotides.</text>
</comment>
<comment type="similarity">
    <text evidence="1">Belongs to the GreA/GreB family.</text>
</comment>
<feature type="chain" id="PRO_1000094194" description="Transcription elongation factor GreA">
    <location>
        <begin position="1"/>
        <end position="161"/>
    </location>
</feature>
<feature type="coiled-coil region" evidence="1">
    <location>
        <begin position="43"/>
        <end position="68"/>
    </location>
</feature>
<name>GREA_RICB8</name>
<reference key="1">
    <citation type="submission" date="2007-09" db="EMBL/GenBank/DDBJ databases">
        <title>Complete genome sequencing of Rickettsia bellii.</title>
        <authorList>
            <person name="Madan A."/>
            <person name="Lee H."/>
            <person name="Madan A."/>
            <person name="Yoon J.-G."/>
            <person name="Ryu G.-Y."/>
            <person name="Dasch G."/>
            <person name="Ereemeva M."/>
        </authorList>
    </citation>
    <scope>NUCLEOTIDE SEQUENCE [LARGE SCALE GENOMIC DNA]</scope>
    <source>
        <strain>OSU 85-389</strain>
    </source>
</reference>
<gene>
    <name evidence="1" type="primary">greA</name>
    <name type="ordered locus">A1I_00635</name>
</gene>
<proteinExistence type="inferred from homology"/>
<sequence>MAKFPITDQGFEKLEHELKHLKHVERKKVSEDIAEARAHGDLSENAEYEAAREKQAFVEARIKHLEDITARAEIINVAKLSGDSIKFGATVVLIDDETEEEVMYHIVGEYEADITKKRVSIASPIAKALIGKSVGDIVEVMTPGGVKSYEVVTIKYEELVF</sequence>
<keyword id="KW-0175">Coiled coil</keyword>
<keyword id="KW-0238">DNA-binding</keyword>
<keyword id="KW-0804">Transcription</keyword>
<keyword id="KW-0805">Transcription regulation</keyword>
<accession>A8GUN3</accession>